<gene>
    <name evidence="2" type="primary">tal</name>
    <name type="ordered locus">Veis_1779</name>
</gene>
<dbReference type="EC" id="2.2.1.2" evidence="2"/>
<dbReference type="EMBL" id="CP000542">
    <property type="protein sequence ID" value="ABM57533.1"/>
    <property type="molecule type" value="Genomic_DNA"/>
</dbReference>
<dbReference type="RefSeq" id="WP_011809540.1">
    <property type="nucleotide sequence ID" value="NC_008786.1"/>
</dbReference>
<dbReference type="SMR" id="A1WIS6"/>
<dbReference type="STRING" id="391735.Veis_1779"/>
<dbReference type="GeneID" id="76460386"/>
<dbReference type="KEGG" id="vei:Veis_1779"/>
<dbReference type="eggNOG" id="COG0176">
    <property type="taxonomic scope" value="Bacteria"/>
</dbReference>
<dbReference type="HOGENOM" id="CLU_047470_0_1_4"/>
<dbReference type="OrthoDB" id="9809101at2"/>
<dbReference type="UniPathway" id="UPA00115">
    <property type="reaction ID" value="UER00414"/>
</dbReference>
<dbReference type="Proteomes" id="UP000000374">
    <property type="component" value="Chromosome"/>
</dbReference>
<dbReference type="GO" id="GO:0005737">
    <property type="term" value="C:cytoplasm"/>
    <property type="evidence" value="ECO:0007669"/>
    <property type="project" value="UniProtKB-SubCell"/>
</dbReference>
<dbReference type="GO" id="GO:0004801">
    <property type="term" value="F:transaldolase activity"/>
    <property type="evidence" value="ECO:0000250"/>
    <property type="project" value="UniProtKB"/>
</dbReference>
<dbReference type="GO" id="GO:0005975">
    <property type="term" value="P:carbohydrate metabolic process"/>
    <property type="evidence" value="ECO:0007669"/>
    <property type="project" value="InterPro"/>
</dbReference>
<dbReference type="GO" id="GO:0006098">
    <property type="term" value="P:pentose-phosphate shunt"/>
    <property type="evidence" value="ECO:0007669"/>
    <property type="project" value="UniProtKB-UniRule"/>
</dbReference>
<dbReference type="CDD" id="cd00957">
    <property type="entry name" value="Transaldolase_TalAB"/>
    <property type="match status" value="1"/>
</dbReference>
<dbReference type="FunFam" id="3.20.20.70:FF:000002">
    <property type="entry name" value="Transaldolase"/>
    <property type="match status" value="1"/>
</dbReference>
<dbReference type="Gene3D" id="3.20.20.70">
    <property type="entry name" value="Aldolase class I"/>
    <property type="match status" value="1"/>
</dbReference>
<dbReference type="HAMAP" id="MF_00492">
    <property type="entry name" value="Transaldolase_1"/>
    <property type="match status" value="1"/>
</dbReference>
<dbReference type="InterPro" id="IPR013785">
    <property type="entry name" value="Aldolase_TIM"/>
</dbReference>
<dbReference type="InterPro" id="IPR001585">
    <property type="entry name" value="TAL/FSA"/>
</dbReference>
<dbReference type="InterPro" id="IPR004730">
    <property type="entry name" value="Transaldolase_1"/>
</dbReference>
<dbReference type="InterPro" id="IPR018225">
    <property type="entry name" value="Transaldolase_AS"/>
</dbReference>
<dbReference type="NCBIfam" id="TIGR00874">
    <property type="entry name" value="talAB"/>
    <property type="match status" value="1"/>
</dbReference>
<dbReference type="PANTHER" id="PTHR10683">
    <property type="entry name" value="TRANSALDOLASE"/>
    <property type="match status" value="1"/>
</dbReference>
<dbReference type="PANTHER" id="PTHR10683:SF18">
    <property type="entry name" value="TRANSALDOLASE"/>
    <property type="match status" value="1"/>
</dbReference>
<dbReference type="Pfam" id="PF00923">
    <property type="entry name" value="TAL_FSA"/>
    <property type="match status" value="1"/>
</dbReference>
<dbReference type="SUPFAM" id="SSF51569">
    <property type="entry name" value="Aldolase"/>
    <property type="match status" value="1"/>
</dbReference>
<dbReference type="PROSITE" id="PS01054">
    <property type="entry name" value="TRANSALDOLASE_1"/>
    <property type="match status" value="1"/>
</dbReference>
<dbReference type="PROSITE" id="PS00958">
    <property type="entry name" value="TRANSALDOLASE_2"/>
    <property type="match status" value="1"/>
</dbReference>
<comment type="function">
    <text evidence="2">Transaldolase is important for the balance of metabolites in the pentose-phosphate pathway.</text>
</comment>
<comment type="catalytic activity">
    <reaction evidence="2">
        <text>D-sedoheptulose 7-phosphate + D-glyceraldehyde 3-phosphate = D-erythrose 4-phosphate + beta-D-fructose 6-phosphate</text>
        <dbReference type="Rhea" id="RHEA:17053"/>
        <dbReference type="ChEBI" id="CHEBI:16897"/>
        <dbReference type="ChEBI" id="CHEBI:57483"/>
        <dbReference type="ChEBI" id="CHEBI:57634"/>
        <dbReference type="ChEBI" id="CHEBI:59776"/>
        <dbReference type="EC" id="2.2.1.2"/>
    </reaction>
</comment>
<comment type="pathway">
    <text evidence="2">Carbohydrate degradation; pentose phosphate pathway; D-glyceraldehyde 3-phosphate and beta-D-fructose 6-phosphate from D-ribose 5-phosphate and D-xylulose 5-phosphate (non-oxidative stage): step 2/3.</text>
</comment>
<comment type="subunit">
    <text evidence="1">Homodimer.</text>
</comment>
<comment type="subcellular location">
    <subcellularLocation>
        <location evidence="2">Cytoplasm</location>
    </subcellularLocation>
</comment>
<comment type="similarity">
    <text evidence="2">Belongs to the transaldolase family. Type 1 subfamily.</text>
</comment>
<proteinExistence type="inferred from homology"/>
<protein>
    <recommendedName>
        <fullName evidence="2">Transaldolase</fullName>
        <ecNumber evidence="2">2.2.1.2</ecNumber>
    </recommendedName>
</protein>
<name>TAL_VEREI</name>
<organism>
    <name type="scientific">Verminephrobacter eiseniae (strain EF01-2)</name>
    <dbReference type="NCBI Taxonomy" id="391735"/>
    <lineage>
        <taxon>Bacteria</taxon>
        <taxon>Pseudomonadati</taxon>
        <taxon>Pseudomonadota</taxon>
        <taxon>Betaproteobacteria</taxon>
        <taxon>Burkholderiales</taxon>
        <taxon>Comamonadaceae</taxon>
        <taxon>Verminephrobacter</taxon>
    </lineage>
</organism>
<keyword id="KW-0963">Cytoplasm</keyword>
<keyword id="KW-0570">Pentose shunt</keyword>
<keyword id="KW-1185">Reference proteome</keyword>
<keyword id="KW-0704">Schiff base</keyword>
<keyword id="KW-0808">Transferase</keyword>
<reference key="1">
    <citation type="submission" date="2006-12" db="EMBL/GenBank/DDBJ databases">
        <title>Complete sequence of chromosome 1 of Verminephrobacter eiseniae EF01-2.</title>
        <authorList>
            <person name="Copeland A."/>
            <person name="Lucas S."/>
            <person name="Lapidus A."/>
            <person name="Barry K."/>
            <person name="Detter J.C."/>
            <person name="Glavina del Rio T."/>
            <person name="Dalin E."/>
            <person name="Tice H."/>
            <person name="Pitluck S."/>
            <person name="Chertkov O."/>
            <person name="Brettin T."/>
            <person name="Bruce D."/>
            <person name="Han C."/>
            <person name="Tapia R."/>
            <person name="Gilna P."/>
            <person name="Schmutz J."/>
            <person name="Larimer F."/>
            <person name="Land M."/>
            <person name="Hauser L."/>
            <person name="Kyrpides N."/>
            <person name="Kim E."/>
            <person name="Stahl D."/>
            <person name="Richardson P."/>
        </authorList>
    </citation>
    <scope>NUCLEOTIDE SEQUENCE [LARGE SCALE GENOMIC DNA]</scope>
    <source>
        <strain>EF01-2</strain>
    </source>
</reference>
<accession>A1WIS6</accession>
<evidence type="ECO:0000250" key="1"/>
<evidence type="ECO:0000255" key="2">
    <source>
        <dbReference type="HAMAP-Rule" id="MF_00492"/>
    </source>
</evidence>
<feature type="chain" id="PRO_1000014532" description="Transaldolase">
    <location>
        <begin position="1"/>
        <end position="316"/>
    </location>
</feature>
<feature type="active site" description="Schiff-base intermediate with substrate" evidence="2">
    <location>
        <position position="125"/>
    </location>
</feature>
<sequence length="316" mass="34340">MNQLDALKQFTTVVADTGDFKQLAQFQPQDATTNPSLILKAVQQPEYAPLLQDTVARCKGRTMDDIIDRLLVRFGCEILAIIPGRVSTEVDARLSFDTYASITRAERIIDLYQAEGIDIDRVLIKIAATWEGIKAAEKLEQRGIHTNLTLLFSFAQAVACGQARVQLISPFVGRIYDWHKKQAGAHWDEAAAAGANDPGVRSVTQIYNHYKHFGIATEVMGASFRNLGQITALAGCDLLTIAPELLARLVASAAPLQPALDAEAAKGMALPAVNYDEAGWRYALNEDAMATEKLAEGIRAFAADAVKLEQLILASG</sequence>